<name>Y032_HELPG</name>
<dbReference type="EMBL" id="CP001173">
    <property type="protein sequence ID" value="ACI26808.1"/>
    <property type="molecule type" value="Genomic_DNA"/>
</dbReference>
<dbReference type="RefSeq" id="WP_000347926.1">
    <property type="nucleotide sequence ID" value="NC_011333.1"/>
</dbReference>
<dbReference type="SMR" id="B5Z6A3"/>
<dbReference type="KEGG" id="hpg:HPG27_32"/>
<dbReference type="HOGENOM" id="CLU_140930_2_1_7"/>
<dbReference type="Proteomes" id="UP000001735">
    <property type="component" value="Chromosome"/>
</dbReference>
<dbReference type="GO" id="GO:0043590">
    <property type="term" value="C:bacterial nucleoid"/>
    <property type="evidence" value="ECO:0007669"/>
    <property type="project" value="UniProtKB-UniRule"/>
</dbReference>
<dbReference type="GO" id="GO:0005737">
    <property type="term" value="C:cytoplasm"/>
    <property type="evidence" value="ECO:0007669"/>
    <property type="project" value="UniProtKB-UniRule"/>
</dbReference>
<dbReference type="GO" id="GO:0003677">
    <property type="term" value="F:DNA binding"/>
    <property type="evidence" value="ECO:0007669"/>
    <property type="project" value="UniProtKB-UniRule"/>
</dbReference>
<dbReference type="Gene3D" id="3.30.1310.10">
    <property type="entry name" value="Nucleoid-associated protein YbaB-like domain"/>
    <property type="match status" value="1"/>
</dbReference>
<dbReference type="HAMAP" id="MF_00274">
    <property type="entry name" value="DNA_YbaB_EbfC"/>
    <property type="match status" value="1"/>
</dbReference>
<dbReference type="InterPro" id="IPR036894">
    <property type="entry name" value="YbaB-like_sf"/>
</dbReference>
<dbReference type="InterPro" id="IPR004401">
    <property type="entry name" value="YbaB/EbfC"/>
</dbReference>
<dbReference type="NCBIfam" id="TIGR00103">
    <property type="entry name" value="DNA_YbaB_EbfC"/>
    <property type="match status" value="1"/>
</dbReference>
<dbReference type="Pfam" id="PF02575">
    <property type="entry name" value="YbaB_DNA_bd"/>
    <property type="match status" value="1"/>
</dbReference>
<dbReference type="SUPFAM" id="SSF82607">
    <property type="entry name" value="YbaB-like"/>
    <property type="match status" value="1"/>
</dbReference>
<evidence type="ECO:0000255" key="1">
    <source>
        <dbReference type="HAMAP-Rule" id="MF_00274"/>
    </source>
</evidence>
<sequence>MDFSQLGGLSGLLDGMKKEFSQLEEKNKDTIHTSKSGGGMVSVSFNGLGELVDLQIDDSLLEDKEAMQIYLMSALNDGYKAVEENRKNLAFNMLGNFAKL</sequence>
<accession>B5Z6A3</accession>
<reference key="1">
    <citation type="journal article" date="2009" name="J. Bacteriol.">
        <title>The complete genome sequence of Helicobacter pylori strain G27.</title>
        <authorList>
            <person name="Baltrus D.A."/>
            <person name="Amieva M.R."/>
            <person name="Covacci A."/>
            <person name="Lowe T.M."/>
            <person name="Merrell D.S."/>
            <person name="Ottemann K.M."/>
            <person name="Stein M."/>
            <person name="Salama N.R."/>
            <person name="Guillemin K."/>
        </authorList>
    </citation>
    <scope>NUCLEOTIDE SEQUENCE [LARGE SCALE GENOMIC DNA]</scope>
    <source>
        <strain>G27</strain>
    </source>
</reference>
<feature type="chain" id="PRO_1000114616" description="Nucleoid-associated protein HPG27_32">
    <location>
        <begin position="1"/>
        <end position="100"/>
    </location>
</feature>
<gene>
    <name type="ordered locus">HPG27_32</name>
</gene>
<keyword id="KW-0963">Cytoplasm</keyword>
<keyword id="KW-0238">DNA-binding</keyword>
<keyword id="KW-1185">Reference proteome</keyword>
<organism>
    <name type="scientific">Helicobacter pylori (strain G27)</name>
    <dbReference type="NCBI Taxonomy" id="563041"/>
    <lineage>
        <taxon>Bacteria</taxon>
        <taxon>Pseudomonadati</taxon>
        <taxon>Campylobacterota</taxon>
        <taxon>Epsilonproteobacteria</taxon>
        <taxon>Campylobacterales</taxon>
        <taxon>Helicobacteraceae</taxon>
        <taxon>Helicobacter</taxon>
    </lineage>
</organism>
<protein>
    <recommendedName>
        <fullName evidence="1">Nucleoid-associated protein HPG27_32</fullName>
    </recommendedName>
</protein>
<proteinExistence type="inferred from homology"/>
<comment type="function">
    <text evidence="1">Binds to DNA and alters its conformation. May be involved in regulation of gene expression, nucleoid organization and DNA protection.</text>
</comment>
<comment type="subunit">
    <text evidence="1">Homodimer.</text>
</comment>
<comment type="subcellular location">
    <subcellularLocation>
        <location evidence="1">Cytoplasm</location>
        <location evidence="1">Nucleoid</location>
    </subcellularLocation>
</comment>
<comment type="similarity">
    <text evidence="1">Belongs to the YbaB/EbfC family.</text>
</comment>